<gene>
    <name type="ordered locus">MPN_655</name>
    <name type="ORF">E09_orf204o</name>
    <name type="ORF">MP187</name>
</gene>
<proteinExistence type="inferred from homology"/>
<keyword id="KW-1185">Reference proteome</keyword>
<feature type="chain" id="PRO_0000221613" description="UPF0134 protein MPN_655">
    <location>
        <begin position="1"/>
        <end position="204"/>
    </location>
</feature>
<feature type="region of interest" description="Disordered" evidence="1">
    <location>
        <begin position="46"/>
        <end position="132"/>
    </location>
</feature>
<feature type="compositionally biased region" description="Pro residues" evidence="1">
    <location>
        <begin position="64"/>
        <end position="80"/>
    </location>
</feature>
<feature type="compositionally biased region" description="Basic and acidic residues" evidence="1">
    <location>
        <begin position="117"/>
        <end position="132"/>
    </location>
</feature>
<feature type="sequence conflict" description="In Ref. 2." evidence="2" ref="2">
    <location>
        <begin position="124"/>
        <end position="126"/>
    </location>
</feature>
<protein>
    <recommendedName>
        <fullName>UPF0134 protein MPN_655</fullName>
    </recommendedName>
</protein>
<reference key="1">
    <citation type="journal article" date="1996" name="Nucleic Acids Res.">
        <title>Complete sequence analysis of the genome of the bacterium Mycoplasma pneumoniae.</title>
        <authorList>
            <person name="Himmelreich R."/>
            <person name="Hilbert H."/>
            <person name="Plagens H."/>
            <person name="Pirkl E."/>
            <person name="Li B.-C."/>
            <person name="Herrmann R."/>
        </authorList>
    </citation>
    <scope>NUCLEOTIDE SEQUENCE [LARGE SCALE GENOMIC DNA]</scope>
    <source>
        <strain>ATCC 29342 / M129 / Subtype 1</strain>
    </source>
</reference>
<reference key="2">
    <citation type="journal article" date="1994" name="Mol. Microbiol.">
        <title>Identification and characterization of hitherto unknown Mycoplasma pneumoniae proteins.</title>
        <authorList>
            <person name="Proft T."/>
            <person name="Herrmann R."/>
        </authorList>
    </citation>
    <scope>NUCLEOTIDE SEQUENCE [GENOMIC DNA] OF 96-188</scope>
    <source>
        <strain>ATCC 29342 / M129 / Subtype 1</strain>
    </source>
</reference>
<sequence>MSNNNKYFTITKKQYKKMRRNKIELLFNVKVLKKKNGRQKFKILHEVENKPKIPIKIIEDQPESPKPLKPPKPPKPPKGPDNPEEPDSPEEPKETDQPGGPDNPNAGNKKMPTPEEYVTRKEFNEFKDSNNQRLTKIENKVDKLEVKVDKLAEIVQTQGEEIKELKVEQKAQSETLQLILKTLQKMNDRLDRMETRLDKIDSPK</sequence>
<comment type="similarity">
    <text evidence="2">Belongs to the UPF0134 family.</text>
</comment>
<dbReference type="EMBL" id="U00089">
    <property type="protein sequence ID" value="AAB95835.1"/>
    <property type="molecule type" value="Genomic_DNA"/>
</dbReference>
<dbReference type="EMBL" id="Z32652">
    <property type="protein sequence ID" value="CAA83573.1"/>
    <property type="molecule type" value="Genomic_DNA"/>
</dbReference>
<dbReference type="PIR" id="S73513">
    <property type="entry name" value="S73513"/>
</dbReference>
<dbReference type="RefSeq" id="NP_110344.1">
    <property type="nucleotide sequence ID" value="NC_000912.1"/>
</dbReference>
<dbReference type="SMR" id="P75136"/>
<dbReference type="STRING" id="272634.MPN_655"/>
<dbReference type="EnsemblBacteria" id="AAB95835">
    <property type="protein sequence ID" value="AAB95835"/>
    <property type="gene ID" value="MPN_655"/>
</dbReference>
<dbReference type="KEGG" id="mpn:MPN_655"/>
<dbReference type="PATRIC" id="fig|272634.6.peg.720"/>
<dbReference type="HOGENOM" id="CLU_111101_0_0_14"/>
<dbReference type="BioCyc" id="MPNE272634:G1GJ3-1046-MONOMER"/>
<dbReference type="Proteomes" id="UP000000808">
    <property type="component" value="Chromosome"/>
</dbReference>
<dbReference type="Gene3D" id="6.10.250.40">
    <property type="match status" value="1"/>
</dbReference>
<dbReference type="InterPro" id="IPR002862">
    <property type="entry name" value="DUF16"/>
</dbReference>
<dbReference type="Pfam" id="PF01519">
    <property type="entry name" value="DUF16"/>
    <property type="match status" value="1"/>
</dbReference>
<dbReference type="SUPFAM" id="SSF144266">
    <property type="entry name" value="MPN010-like"/>
    <property type="match status" value="1"/>
</dbReference>
<organism>
    <name type="scientific">Mycoplasma pneumoniae (strain ATCC 29342 / M129 / Subtype 1)</name>
    <name type="common">Mycoplasmoides pneumoniae</name>
    <dbReference type="NCBI Taxonomy" id="272634"/>
    <lineage>
        <taxon>Bacteria</taxon>
        <taxon>Bacillati</taxon>
        <taxon>Mycoplasmatota</taxon>
        <taxon>Mycoplasmoidales</taxon>
        <taxon>Mycoplasmoidaceae</taxon>
        <taxon>Mycoplasmoides</taxon>
    </lineage>
</organism>
<accession>P75136</accession>
<accession>Q50351</accession>
<evidence type="ECO:0000256" key="1">
    <source>
        <dbReference type="SAM" id="MobiDB-lite"/>
    </source>
</evidence>
<evidence type="ECO:0000305" key="2"/>
<name>Y655_MYCPN</name>